<name>VE6_HPV39</name>
<evidence type="ECO:0000255" key="1">
    <source>
        <dbReference type="HAMAP-Rule" id="MF_04006"/>
    </source>
</evidence>
<evidence type="ECO:0000305" key="2"/>
<organismHost>
    <name type="scientific">Homo sapiens</name>
    <name type="common">Human</name>
    <dbReference type="NCBI Taxonomy" id="9606"/>
</organismHost>
<sequence>MARFHNPAERPYKLPDLCTTLDTTLQDITIACVYCRRPLQQTEVYEFAFSDLYVVYRDGEPLAACQSCIKFYAKIRELRYYSDSVYATTLENITNTKLYNLLIRCMCCLKPLCPAEKLRHLNSKRRFHKIAGSYTGQCRRCWTTKREDRRLTRRETQV</sequence>
<accession>P24835</accession>
<protein>
    <recommendedName>
        <fullName evidence="1">Protein E6</fullName>
    </recommendedName>
</protein>
<comment type="function">
    <text>This protein may be involved in the oncogenic potential of this virus (cervical neoplasia-associated virus).</text>
</comment>
<comment type="function">
    <text evidence="1">Plays a major role in the induction and maintenance of cellular transformation. Acts mainly as an oncoprotein by stimulating the destruction of many host cell key regulatory proteins. E6 associates with host UBE3A/E6-AP ubiquitin-protein ligase, and inactivates tumor suppressors TP53 and TP73 by targeting them to the 26S proteasome for degradation. In turn, DNA damage and chromosomal instabilities increase and lead to cell proliferation and cancer development. The complex E6/E6AP targets several other substrates to degradation via the proteasome including host DLG1 or NFX1, a repressor of human telomerase reverse transcriptase (hTERT). The resulting increased expression of hTERT prevents the shortening of telomere length leading to cell immortalization. Other cellular targets including BAK1, Fas-associated death domain-containing protein (FADD) and procaspase 8, are degraded by E6/E6AP causing inhibition of apoptosis. E6 also inhibits immune response by interacting with host IRF3 and TYK2. These interactions prevent IRF3 transcriptional activities and inhibit TYK2-mediated JAK-STAT activation by interferon alpha resulting in inhibition of the interferon signaling pathway.</text>
</comment>
<comment type="subunit">
    <text evidence="1">Forms homodimers. Interacts with ubiquitin-protein ligase UBE3A/E6-AP and thus forms a complex with human TP53. Interacts with human NFX1 and MAGI3. Interacts with human IRF3; this interaction inhibits the establishment of antiviral state. Interacts with human TYK2; this interaction inhibits JAK-STAT activation by interferon alpha. Interacts with host DLG1; this interaction leads to the proteasomal degradation of DLG1.</text>
</comment>
<comment type="interaction">
    <interactant intactId="EBI-11793707">
        <id>P24835</id>
    </interactant>
    <interactant intactId="EBI-357481">
        <id>Q12959</id>
        <label>DLG1</label>
    </interactant>
    <organismsDiffer>true</organismsDiffer>
    <experiments>3</experiments>
</comment>
<comment type="interaction">
    <interactant intactId="EBI-11793707">
        <id>P24835</id>
    </interactant>
    <interactant intactId="EBI-357345">
        <id>Q14160</id>
        <label>SCRIB</label>
    </interactant>
    <organismsDiffer>true</organismsDiffer>
    <experiments>2</experiments>
</comment>
<comment type="subcellular location">
    <subcellularLocation>
        <location evidence="1">Host cytoplasm</location>
    </subcellularLocation>
    <subcellularLocation>
        <location evidence="1">Host nucleus</location>
    </subcellularLocation>
</comment>
<comment type="miscellaneous">
    <text evidence="1">Belongs to the high risk human alphapapillomavirus family. The cancer-causing human papillomavirus E6 protein has a unique carboxy terminal PDZ domain containing substrate.</text>
</comment>
<comment type="similarity">
    <text evidence="2">Belongs to the papillomaviridae E6 protein family.</text>
</comment>
<proteinExistence type="evidence at protein level"/>
<gene>
    <name evidence="1" type="primary">E6</name>
</gene>
<feature type="chain" id="PRO_0000133358" description="Protein E6">
    <location>
        <begin position="1"/>
        <end position="158"/>
    </location>
</feature>
<feature type="zinc finger region" evidence="1">
    <location>
        <begin position="32"/>
        <end position="68"/>
    </location>
</feature>
<feature type="zinc finger region" evidence="1">
    <location>
        <begin position="105"/>
        <end position="141"/>
    </location>
</feature>
<feature type="short sequence motif" description="PDZ-binding domain" evidence="1">
    <location>
        <begin position="156"/>
        <end position="158"/>
    </location>
</feature>
<organism>
    <name type="scientific">Human papillomavirus 39</name>
    <dbReference type="NCBI Taxonomy" id="10588"/>
    <lineage>
        <taxon>Viruses</taxon>
        <taxon>Monodnaviria</taxon>
        <taxon>Shotokuvirae</taxon>
        <taxon>Cossaviricota</taxon>
        <taxon>Papovaviricetes</taxon>
        <taxon>Zurhausenvirales</taxon>
        <taxon>Papillomaviridae</taxon>
        <taxon>Firstpapillomavirinae</taxon>
        <taxon>Alphapapillomavirus</taxon>
        <taxon>Alphapapillomavirus 7</taxon>
    </lineage>
</organism>
<keyword id="KW-0010">Activator</keyword>
<keyword id="KW-0238">DNA-binding</keyword>
<keyword id="KW-0244">Early protein</keyword>
<keyword id="KW-1035">Host cytoplasm</keyword>
<keyword id="KW-1048">Host nucleus</keyword>
<keyword id="KW-0945">Host-virus interaction</keyword>
<keyword id="KW-1090">Inhibition of host innate immune response by virus</keyword>
<keyword id="KW-1092">Inhibition of host IRF3 by virus</keyword>
<keyword id="KW-1113">Inhibition of host RLR pathway by virus</keyword>
<keyword id="KW-0479">Metal-binding</keyword>
<keyword id="KW-1119">Modulation of host cell apoptosis by virus</keyword>
<keyword id="KW-0553">Oncogene</keyword>
<keyword id="KW-1185">Reference proteome</keyword>
<keyword id="KW-0804">Transcription</keyword>
<keyword id="KW-0805">Transcription regulation</keyword>
<keyword id="KW-0899">Viral immunoevasion</keyword>
<keyword id="KW-0862">Zinc</keyword>
<keyword id="KW-0863">Zinc-finger</keyword>
<dbReference type="EMBL" id="M62849">
    <property type="protein sequence ID" value="AAA47050.1"/>
    <property type="molecule type" value="Genomic_DNA"/>
</dbReference>
<dbReference type="PIR" id="A38502">
    <property type="entry name" value="W6WL39"/>
</dbReference>
<dbReference type="SMR" id="P24835"/>
<dbReference type="IntAct" id="P24835">
    <property type="interactions" value="37"/>
</dbReference>
<dbReference type="MINT" id="P24835"/>
<dbReference type="Proteomes" id="UP000009120">
    <property type="component" value="Genome"/>
</dbReference>
<dbReference type="GO" id="GO:0030430">
    <property type="term" value="C:host cell cytoplasm"/>
    <property type="evidence" value="ECO:0007669"/>
    <property type="project" value="UniProtKB-SubCell"/>
</dbReference>
<dbReference type="GO" id="GO:0042025">
    <property type="term" value="C:host cell nucleus"/>
    <property type="evidence" value="ECO:0007669"/>
    <property type="project" value="UniProtKB-SubCell"/>
</dbReference>
<dbReference type="GO" id="GO:0003677">
    <property type="term" value="F:DNA binding"/>
    <property type="evidence" value="ECO:0007669"/>
    <property type="project" value="UniProtKB-UniRule"/>
</dbReference>
<dbReference type="GO" id="GO:0030165">
    <property type="term" value="F:PDZ domain binding"/>
    <property type="evidence" value="ECO:0007669"/>
    <property type="project" value="UniProtKB-UniRule"/>
</dbReference>
<dbReference type="GO" id="GO:0008270">
    <property type="term" value="F:zinc ion binding"/>
    <property type="evidence" value="ECO:0007669"/>
    <property type="project" value="UniProtKB-KW"/>
</dbReference>
<dbReference type="GO" id="GO:0006351">
    <property type="term" value="P:DNA-templated transcription"/>
    <property type="evidence" value="ECO:0007669"/>
    <property type="project" value="UniProtKB-UniRule"/>
</dbReference>
<dbReference type="GO" id="GO:0006355">
    <property type="term" value="P:regulation of DNA-templated transcription"/>
    <property type="evidence" value="ECO:0007669"/>
    <property type="project" value="UniProtKB-UniRule"/>
</dbReference>
<dbReference type="GO" id="GO:0052150">
    <property type="term" value="P:symbiont-mediated perturbation of host apoptosis"/>
    <property type="evidence" value="ECO:0007669"/>
    <property type="project" value="UniProtKB-KW"/>
</dbReference>
<dbReference type="GO" id="GO:0039648">
    <property type="term" value="P:symbiont-mediated perturbation of host ubiquitin-like protein modification"/>
    <property type="evidence" value="ECO:0007669"/>
    <property type="project" value="UniProtKB-UniRule"/>
</dbReference>
<dbReference type="GO" id="GO:0039548">
    <property type="term" value="P:symbiont-mediated suppression of host cytoplasmic pattern recognition receptor signaling pathway via inhibition of IRF3 activity"/>
    <property type="evidence" value="ECO:0007669"/>
    <property type="project" value="UniProtKB-UniRule"/>
</dbReference>
<dbReference type="GO" id="GO:0039502">
    <property type="term" value="P:symbiont-mediated suppression of host type I interferon-mediated signaling pathway"/>
    <property type="evidence" value="ECO:0007669"/>
    <property type="project" value="UniProtKB-UniRule"/>
</dbReference>
<dbReference type="FunFam" id="3.30.240.40:FF:000001">
    <property type="entry name" value="Protein E6"/>
    <property type="match status" value="1"/>
</dbReference>
<dbReference type="FunFam" id="3.30.240.40:FF:000002">
    <property type="entry name" value="Protein E6"/>
    <property type="match status" value="1"/>
</dbReference>
<dbReference type="Gene3D" id="3.30.240.40">
    <property type="entry name" value="E6 early regulatory protein"/>
    <property type="match status" value="2"/>
</dbReference>
<dbReference type="HAMAP" id="MF_04006">
    <property type="entry name" value="HPV_E6"/>
    <property type="match status" value="1"/>
</dbReference>
<dbReference type="InterPro" id="IPR001334">
    <property type="entry name" value="E6"/>
</dbReference>
<dbReference type="InterPro" id="IPR038575">
    <property type="entry name" value="E6_sf"/>
</dbReference>
<dbReference type="Pfam" id="PF00518">
    <property type="entry name" value="E6"/>
    <property type="match status" value="1"/>
</dbReference>
<dbReference type="SUPFAM" id="SSF161229">
    <property type="entry name" value="E6 C-terminal domain-like"/>
    <property type="match status" value="2"/>
</dbReference>
<reference key="1">
    <citation type="journal article" date="1991" name="Virology">
        <title>Genome organization and nucleotide sequence of human papillomavirus type 39.</title>
        <authorList>
            <person name="Volpers C."/>
            <person name="Streeck R.E."/>
        </authorList>
    </citation>
    <scope>NUCLEOTIDE SEQUENCE [GENOMIC DNA]</scope>
</reference>